<reference key="1">
    <citation type="submission" date="2007-11" db="EMBL/GenBank/DDBJ databases">
        <title>Molecular cloning of the trypsin/amylase inhibitor-like protein gene in rice.</title>
        <authorList>
            <person name="Yoon U.H."/>
            <person name="Kim Y.H."/>
        </authorList>
    </citation>
    <scope>NUCLEOTIDE SEQUENCE [MRNA]</scope>
    <source>
        <strain>cv. Ilpoombyeo</strain>
        <tissue>Seed</tissue>
    </source>
</reference>
<reference key="2">
    <citation type="journal article" date="2002" name="Nature">
        <title>The genome sequence and structure of rice chromosome 1.</title>
        <authorList>
            <person name="Sasaki T."/>
            <person name="Matsumoto T."/>
            <person name="Yamamoto K."/>
            <person name="Sakata K."/>
            <person name="Baba T."/>
            <person name="Katayose Y."/>
            <person name="Wu J."/>
            <person name="Niimura Y."/>
            <person name="Cheng Z."/>
            <person name="Nagamura Y."/>
            <person name="Antonio B.A."/>
            <person name="Kanamori H."/>
            <person name="Hosokawa S."/>
            <person name="Masukawa M."/>
            <person name="Arikawa K."/>
            <person name="Chiden Y."/>
            <person name="Hayashi M."/>
            <person name="Okamoto M."/>
            <person name="Ando T."/>
            <person name="Aoki H."/>
            <person name="Arita K."/>
            <person name="Hamada M."/>
            <person name="Harada C."/>
            <person name="Hijishita S."/>
            <person name="Honda M."/>
            <person name="Ichikawa Y."/>
            <person name="Idonuma A."/>
            <person name="Iijima M."/>
            <person name="Ikeda M."/>
            <person name="Ikeno M."/>
            <person name="Ito S."/>
            <person name="Ito T."/>
            <person name="Ito Y."/>
            <person name="Ito Y."/>
            <person name="Iwabuchi A."/>
            <person name="Kamiya K."/>
            <person name="Karasawa W."/>
            <person name="Katagiri S."/>
            <person name="Kikuta A."/>
            <person name="Kobayashi N."/>
            <person name="Kono I."/>
            <person name="Machita K."/>
            <person name="Maehara T."/>
            <person name="Mizuno H."/>
            <person name="Mizubayashi T."/>
            <person name="Mukai Y."/>
            <person name="Nagasaki H."/>
            <person name="Nakashima M."/>
            <person name="Nakama Y."/>
            <person name="Nakamichi Y."/>
            <person name="Nakamura M."/>
            <person name="Namiki N."/>
            <person name="Negishi M."/>
            <person name="Ohta I."/>
            <person name="Ono N."/>
            <person name="Saji S."/>
            <person name="Sakai K."/>
            <person name="Shibata M."/>
            <person name="Shimokawa T."/>
            <person name="Shomura A."/>
            <person name="Song J."/>
            <person name="Takazaki Y."/>
            <person name="Terasawa K."/>
            <person name="Tsuji K."/>
            <person name="Waki K."/>
            <person name="Yamagata H."/>
            <person name="Yamane H."/>
            <person name="Yoshiki S."/>
            <person name="Yoshihara R."/>
            <person name="Yukawa K."/>
            <person name="Zhong H."/>
            <person name="Iwama H."/>
            <person name="Endo T."/>
            <person name="Ito H."/>
            <person name="Hahn J.H."/>
            <person name="Kim H.-I."/>
            <person name="Eun M.-Y."/>
            <person name="Yano M."/>
            <person name="Jiang J."/>
            <person name="Gojobori T."/>
        </authorList>
    </citation>
    <scope>NUCLEOTIDE SEQUENCE [LARGE SCALE GENOMIC DNA]</scope>
    <source>
        <strain>cv. Nipponbare</strain>
    </source>
</reference>
<reference key="3">
    <citation type="journal article" date="2005" name="Nature">
        <title>The map-based sequence of the rice genome.</title>
        <authorList>
            <consortium name="International rice genome sequencing project (IRGSP)"/>
        </authorList>
    </citation>
    <scope>NUCLEOTIDE SEQUENCE [LARGE SCALE GENOMIC DNA]</scope>
    <source>
        <strain>cv. Nipponbare</strain>
    </source>
</reference>
<reference key="4">
    <citation type="journal article" date="2008" name="Nucleic Acids Res.">
        <title>The rice annotation project database (RAP-DB): 2008 update.</title>
        <authorList>
            <consortium name="The rice annotation project (RAP)"/>
        </authorList>
    </citation>
    <scope>GENOME REANNOTATION</scope>
    <source>
        <strain>cv. Nipponbare</strain>
    </source>
</reference>
<reference key="5">
    <citation type="journal article" date="2013" name="Rice">
        <title>Improvement of the Oryza sativa Nipponbare reference genome using next generation sequence and optical map data.</title>
        <authorList>
            <person name="Kawahara Y."/>
            <person name="de la Bastide M."/>
            <person name="Hamilton J.P."/>
            <person name="Kanamori H."/>
            <person name="McCombie W.R."/>
            <person name="Ouyang S."/>
            <person name="Schwartz D.C."/>
            <person name="Tanaka T."/>
            <person name="Wu J."/>
            <person name="Zhou S."/>
            <person name="Childs K.L."/>
            <person name="Davidson R.M."/>
            <person name="Lin H."/>
            <person name="Quesada-Ocampo L."/>
            <person name="Vaillancourt B."/>
            <person name="Sakai H."/>
            <person name="Lee S.S."/>
            <person name="Kim J."/>
            <person name="Numa H."/>
            <person name="Itoh T."/>
            <person name="Buell C.R."/>
            <person name="Matsumoto T."/>
        </authorList>
    </citation>
    <scope>GENOME REANNOTATION</scope>
    <source>
        <strain>cv. Nipponbare</strain>
    </source>
</reference>
<reference key="6">
    <citation type="journal article" date="2005" name="PLoS Biol.">
        <title>The genomes of Oryza sativa: a history of duplications.</title>
        <authorList>
            <person name="Yu J."/>
            <person name="Wang J."/>
            <person name="Lin W."/>
            <person name="Li S."/>
            <person name="Li H."/>
            <person name="Zhou J."/>
            <person name="Ni P."/>
            <person name="Dong W."/>
            <person name="Hu S."/>
            <person name="Zeng C."/>
            <person name="Zhang J."/>
            <person name="Zhang Y."/>
            <person name="Li R."/>
            <person name="Xu Z."/>
            <person name="Li S."/>
            <person name="Li X."/>
            <person name="Zheng H."/>
            <person name="Cong L."/>
            <person name="Lin L."/>
            <person name="Yin J."/>
            <person name="Geng J."/>
            <person name="Li G."/>
            <person name="Shi J."/>
            <person name="Liu J."/>
            <person name="Lv H."/>
            <person name="Li J."/>
            <person name="Wang J."/>
            <person name="Deng Y."/>
            <person name="Ran L."/>
            <person name="Shi X."/>
            <person name="Wang X."/>
            <person name="Wu Q."/>
            <person name="Li C."/>
            <person name="Ren X."/>
            <person name="Wang J."/>
            <person name="Wang X."/>
            <person name="Li D."/>
            <person name="Liu D."/>
            <person name="Zhang X."/>
            <person name="Ji Z."/>
            <person name="Zhao W."/>
            <person name="Sun Y."/>
            <person name="Zhang Z."/>
            <person name="Bao J."/>
            <person name="Han Y."/>
            <person name="Dong L."/>
            <person name="Ji J."/>
            <person name="Chen P."/>
            <person name="Wu S."/>
            <person name="Liu J."/>
            <person name="Xiao Y."/>
            <person name="Bu D."/>
            <person name="Tan J."/>
            <person name="Yang L."/>
            <person name="Ye C."/>
            <person name="Zhang J."/>
            <person name="Xu J."/>
            <person name="Zhou Y."/>
            <person name="Yu Y."/>
            <person name="Zhang B."/>
            <person name="Zhuang S."/>
            <person name="Wei H."/>
            <person name="Liu B."/>
            <person name="Lei M."/>
            <person name="Yu H."/>
            <person name="Li Y."/>
            <person name="Xu H."/>
            <person name="Wei S."/>
            <person name="He X."/>
            <person name="Fang L."/>
            <person name="Zhang Z."/>
            <person name="Zhang Y."/>
            <person name="Huang X."/>
            <person name="Su Z."/>
            <person name="Tong W."/>
            <person name="Li J."/>
            <person name="Tong Z."/>
            <person name="Li S."/>
            <person name="Ye J."/>
            <person name="Wang L."/>
            <person name="Fang L."/>
            <person name="Lei T."/>
            <person name="Chen C.-S."/>
            <person name="Chen H.-C."/>
            <person name="Xu Z."/>
            <person name="Li H."/>
            <person name="Huang H."/>
            <person name="Zhang F."/>
            <person name="Xu H."/>
            <person name="Li N."/>
            <person name="Zhao C."/>
            <person name="Li S."/>
            <person name="Dong L."/>
            <person name="Huang Y."/>
            <person name="Li L."/>
            <person name="Xi Y."/>
            <person name="Qi Q."/>
            <person name="Li W."/>
            <person name="Zhang B."/>
            <person name="Hu W."/>
            <person name="Zhang Y."/>
            <person name="Tian X."/>
            <person name="Jiao Y."/>
            <person name="Liang X."/>
            <person name="Jin J."/>
            <person name="Gao L."/>
            <person name="Zheng W."/>
            <person name="Hao B."/>
            <person name="Liu S.-M."/>
            <person name="Wang W."/>
            <person name="Yuan L."/>
            <person name="Cao M."/>
            <person name="McDermott J."/>
            <person name="Samudrala R."/>
            <person name="Wang J."/>
            <person name="Wong G.K.-S."/>
            <person name="Yang H."/>
        </authorList>
    </citation>
    <scope>NUCLEOTIDE SEQUENCE [LARGE SCALE GENOMIC DNA]</scope>
    <source>
        <strain>cv. Nipponbare</strain>
    </source>
</reference>
<reference key="7">
    <citation type="journal article" date="2003" name="Science">
        <title>Collection, mapping, and annotation of over 28,000 cDNA clones from japonica rice.</title>
        <authorList>
            <consortium name="The rice full-length cDNA consortium"/>
        </authorList>
    </citation>
    <scope>NUCLEOTIDE SEQUENCE [LARGE SCALE MRNA]</scope>
    <source>
        <strain>cv. Nipponbare</strain>
    </source>
</reference>
<reference key="8">
    <citation type="journal article" date="2011" name="Regul. Toxicol. Pharmacol.">
        <title>Proteomic analysis of known and candidate rice allergens between non-transgenic and transgenic plants.</title>
        <authorList>
            <person name="Satoh R."/>
            <person name="Nakamura R."/>
            <person name="Komatsu A."/>
            <person name="Oshima M."/>
            <person name="Teshima R."/>
        </authorList>
    </citation>
    <scope>IDENTIFICATION BY MASS SPECTROMETRY</scope>
    <scope>ALLERGEN</scope>
</reference>
<reference key="9">
    <citation type="journal article" date="2013" name="J. Proteome Res.">
        <title>MucoRice-cholera toxin B-subunit, a rice-based oral cholera vaccine, down-regulates the expression of alpha-amylase/trypsin inhibitor-like protein family as major rice allergens.</title>
        <authorList>
            <person name="Kurokawa S."/>
            <person name="Nakamura R."/>
            <person name="Mejima M."/>
            <person name="Kozuka-Hata H."/>
            <person name="Kuroda M."/>
            <person name="Takeyama N."/>
            <person name="Oyama M."/>
            <person name="Satoh S."/>
            <person name="Kiyono H."/>
            <person name="Masumura T."/>
            <person name="Teshima R."/>
            <person name="Yuki Y."/>
        </authorList>
    </citation>
    <scope>IDENTIFICATION BY MASS SPECTROMETRY</scope>
    <scope>ALLERGEN</scope>
</reference>
<evidence type="ECO:0000250" key="1">
    <source>
        <dbReference type="UniProtKB" id="Q01883"/>
    </source>
</evidence>
<evidence type="ECO:0000255" key="2"/>
<evidence type="ECO:0000269" key="3">
    <source>
    </source>
</evidence>
<evidence type="ECO:0000269" key="4">
    <source>
    </source>
</evidence>
<evidence type="ECO:0000305" key="5"/>
<evidence type="ECO:0000312" key="6">
    <source>
        <dbReference type="EMBL" id="BAC79577.1"/>
    </source>
</evidence>
<evidence type="ECO:0000312" key="7">
    <source>
        <dbReference type="EMBL" id="BAC79682.1"/>
    </source>
</evidence>
<evidence type="ECO:0000312" key="8">
    <source>
        <dbReference type="EMBL" id="BAF21106.1"/>
    </source>
</evidence>
<evidence type="ECO:0000312" key="9">
    <source>
        <dbReference type="EMBL" id="EEE66806.1"/>
    </source>
</evidence>
<organism>
    <name type="scientific">Oryza sativa subsp. japonica</name>
    <name type="common">Rice</name>
    <dbReference type="NCBI Taxonomy" id="39947"/>
    <lineage>
        <taxon>Eukaryota</taxon>
        <taxon>Viridiplantae</taxon>
        <taxon>Streptophyta</taxon>
        <taxon>Embryophyta</taxon>
        <taxon>Tracheophyta</taxon>
        <taxon>Spermatophyta</taxon>
        <taxon>Magnoliopsida</taxon>
        <taxon>Liliopsida</taxon>
        <taxon>Poales</taxon>
        <taxon>Poaceae</taxon>
        <taxon>BOP clade</taxon>
        <taxon>Oryzoideae</taxon>
        <taxon>Oryzeae</taxon>
        <taxon>Oryzinae</taxon>
        <taxon>Oryza</taxon>
        <taxon>Oryza sativa</taxon>
    </lineage>
</organism>
<gene>
    <name evidence="8" type="ordered locus">Os07g0216700</name>
    <name evidence="5" type="ordered locus">LOC_Os07g11650</name>
    <name evidence="6" type="ORF">OJ1080_F08.106</name>
    <name evidence="7" type="ORF">OJ1779_B07.133</name>
    <name evidence="9" type="ORF">OsJ_23556</name>
</gene>
<protein>
    <recommendedName>
        <fullName evidence="5">17kDa alpha-amylase/trypsin inhibitor 2</fullName>
    </recommendedName>
    <allergenName>Ory s 17kD</allergenName>
</protein>
<sequence>MALASDKFVLSAIVLAVLTVAAAAAGYGGYGDVGEYCRVGKAVSRNPVPSCRNYIARWCAVAGGRLDSGKQPPRQLLEPCCRELAAVPMQCRCDALSVLVRGVVTEEGDRVAGMISQHAAPGCDAATIAGMASALTDYGRCNLQHTGFFGCPMFGGGMD</sequence>
<accession>Q7X8H9</accession>
<keyword id="KW-0020">Allergen</keyword>
<keyword id="KW-1015">Disulfide bond</keyword>
<keyword id="KW-1185">Reference proteome</keyword>
<keyword id="KW-0964">Secreted</keyword>
<keyword id="KW-0708">Seed storage protein</keyword>
<keyword id="KW-0732">Signal</keyword>
<keyword id="KW-0758">Storage protein</keyword>
<dbReference type="EMBL" id="EU267993">
    <property type="protein sequence ID" value="ACA50515.1"/>
    <property type="molecule type" value="mRNA"/>
</dbReference>
<dbReference type="EMBL" id="AP003805">
    <property type="protein sequence ID" value="BAC79577.1"/>
    <property type="molecule type" value="Genomic_DNA"/>
</dbReference>
<dbReference type="EMBL" id="AP003963">
    <property type="protein sequence ID" value="BAC79682.1"/>
    <property type="molecule type" value="Genomic_DNA"/>
</dbReference>
<dbReference type="EMBL" id="AP008213">
    <property type="protein sequence ID" value="BAF21106.1"/>
    <property type="molecule type" value="Genomic_DNA"/>
</dbReference>
<dbReference type="EMBL" id="AP014963">
    <property type="protein sequence ID" value="BAT00629.1"/>
    <property type="molecule type" value="Genomic_DNA"/>
</dbReference>
<dbReference type="EMBL" id="CM000144">
    <property type="protein sequence ID" value="EEE66806.1"/>
    <property type="molecule type" value="Genomic_DNA"/>
</dbReference>
<dbReference type="EMBL" id="AK107633">
    <property type="protein sequence ID" value="BAG98111.1"/>
    <property type="molecule type" value="mRNA"/>
</dbReference>
<dbReference type="RefSeq" id="XP_015645309.1">
    <property type="nucleotide sequence ID" value="XM_015789823.1"/>
</dbReference>
<dbReference type="SMR" id="Q7X8H9"/>
<dbReference type="FunCoup" id="Q7X8H9">
    <property type="interactions" value="169"/>
</dbReference>
<dbReference type="STRING" id="39947.Q7X8H9"/>
<dbReference type="Allergome" id="9529">
    <property type="allergen name" value="Ory s 17kD"/>
</dbReference>
<dbReference type="PaxDb" id="39947-Q7X8H9"/>
<dbReference type="EnsemblPlants" id="Os07t0216700-01">
    <property type="protein sequence ID" value="Os07t0216700-01"/>
    <property type="gene ID" value="Os07g0216700"/>
</dbReference>
<dbReference type="Gramene" id="Os07t0216700-01">
    <property type="protein sequence ID" value="Os07t0216700-01"/>
    <property type="gene ID" value="Os07g0216700"/>
</dbReference>
<dbReference type="KEGG" id="dosa:Os07g0216700"/>
<dbReference type="eggNOG" id="ENOG502R74X">
    <property type="taxonomic scope" value="Eukaryota"/>
</dbReference>
<dbReference type="HOGENOM" id="CLU_113497_1_1_1"/>
<dbReference type="InParanoid" id="Q7X8H9"/>
<dbReference type="OMA" id="REYITRW"/>
<dbReference type="OrthoDB" id="656731at2759"/>
<dbReference type="Proteomes" id="UP000000763">
    <property type="component" value="Chromosome 7"/>
</dbReference>
<dbReference type="Proteomes" id="UP000007752">
    <property type="component" value="Chromosome 7"/>
</dbReference>
<dbReference type="Proteomes" id="UP000059680">
    <property type="component" value="Chromosome 7"/>
</dbReference>
<dbReference type="GO" id="GO:0005576">
    <property type="term" value="C:extracellular region"/>
    <property type="evidence" value="ECO:0007669"/>
    <property type="project" value="UniProtKB-SubCell"/>
</dbReference>
<dbReference type="GO" id="GO:0019863">
    <property type="term" value="F:IgE binding"/>
    <property type="evidence" value="ECO:0000314"/>
    <property type="project" value="UniProtKB"/>
</dbReference>
<dbReference type="GO" id="GO:0045735">
    <property type="term" value="F:nutrient reservoir activity"/>
    <property type="evidence" value="ECO:0007669"/>
    <property type="project" value="UniProtKB-KW"/>
</dbReference>
<dbReference type="GO" id="GO:0004867">
    <property type="term" value="F:serine-type endopeptidase inhibitor activity"/>
    <property type="evidence" value="ECO:0007669"/>
    <property type="project" value="InterPro"/>
</dbReference>
<dbReference type="CDD" id="cd00261">
    <property type="entry name" value="AAI_SS"/>
    <property type="match status" value="1"/>
</dbReference>
<dbReference type="FunFam" id="1.10.110.10:FF:000006">
    <property type="entry name" value="17kDa alpha-amylase/trypsin inhibitor 1"/>
    <property type="match status" value="1"/>
</dbReference>
<dbReference type="Gene3D" id="1.10.110.10">
    <property type="entry name" value="Plant lipid-transfer and hydrophobic proteins"/>
    <property type="match status" value="1"/>
</dbReference>
<dbReference type="InterPro" id="IPR006106">
    <property type="entry name" value="Allergen/soft/tryp_amyl_inhib"/>
</dbReference>
<dbReference type="InterPro" id="IPR036312">
    <property type="entry name" value="Bifun_inhib/LTP/seed_sf"/>
</dbReference>
<dbReference type="InterPro" id="IPR016140">
    <property type="entry name" value="Bifunc_inhib/LTP/seed_store"/>
</dbReference>
<dbReference type="PANTHER" id="PTHR34481:SF4">
    <property type="entry name" value="17KDA ALPHA-AMYLASE_TRYPSIN INHIBITOR 2"/>
    <property type="match status" value="1"/>
</dbReference>
<dbReference type="PANTHER" id="PTHR34481">
    <property type="entry name" value="TRYPSIN/FACTOR XIIA INHIBITOR-RELATED"/>
    <property type="match status" value="1"/>
</dbReference>
<dbReference type="Pfam" id="PF00234">
    <property type="entry name" value="Tryp_alpha_amyl"/>
    <property type="match status" value="1"/>
</dbReference>
<dbReference type="PRINTS" id="PR00808">
    <property type="entry name" value="AMLASEINHBTR"/>
</dbReference>
<dbReference type="SUPFAM" id="SSF47699">
    <property type="entry name" value="Bifunctional inhibitor/lipid-transfer protein/seed storage 2S albumin"/>
    <property type="match status" value="1"/>
</dbReference>
<comment type="function">
    <text evidence="5">Seed storage protein.</text>
</comment>
<comment type="subcellular location">
    <subcellularLocation>
        <location evidence="5">Secreted</location>
    </subcellularLocation>
</comment>
<comment type="PTM">
    <text evidence="1">Five disulfide bonds are present.</text>
</comment>
<comment type="allergen">
    <text evidence="3 4">Causes an allergic reaction in human. Binds to IgE.</text>
</comment>
<comment type="similarity">
    <text evidence="5">Belongs to the cereal trypsin/alpha-amylase inhibitor family.</text>
</comment>
<proteinExistence type="evidence at protein level"/>
<feature type="signal peptide" evidence="2">
    <location>
        <begin position="1"/>
        <end position="24"/>
    </location>
</feature>
<feature type="chain" id="PRO_5007213378" description="17kDa alpha-amylase/trypsin inhibitor 2">
    <location>
        <begin position="25"/>
        <end position="159"/>
    </location>
</feature>
<feature type="disulfide bond" evidence="1">
    <location>
        <begin position="37"/>
        <end position="91"/>
    </location>
</feature>
<feature type="disulfide bond" evidence="1">
    <location>
        <begin position="51"/>
        <end position="80"/>
    </location>
</feature>
<feature type="disulfide bond" evidence="1">
    <location>
        <begin position="59"/>
        <end position="123"/>
    </location>
</feature>
<feature type="disulfide bond" evidence="1">
    <location>
        <begin position="81"/>
        <end position="141"/>
    </location>
</feature>
<feature type="disulfide bond" evidence="1">
    <location>
        <begin position="93"/>
        <end position="151"/>
    </location>
</feature>
<name>AI172_ORYSJ</name>